<proteinExistence type="evidence at transcript level"/>
<name>NARF_MOUSE</name>
<dbReference type="EMBL" id="AK013432">
    <property type="protein sequence ID" value="BAB28853.1"/>
    <property type="molecule type" value="mRNA"/>
</dbReference>
<dbReference type="EMBL" id="AK076232">
    <property type="protein sequence ID" value="BAC36265.1"/>
    <property type="molecule type" value="mRNA"/>
</dbReference>
<dbReference type="EMBL" id="AK081305">
    <property type="protein sequence ID" value="BAC38191.1"/>
    <property type="molecule type" value="mRNA"/>
</dbReference>
<dbReference type="EMBL" id="AL808021">
    <property type="status" value="NOT_ANNOTATED_CDS"/>
    <property type="molecule type" value="Genomic_DNA"/>
</dbReference>
<dbReference type="EMBL" id="BC016090">
    <property type="protein sequence ID" value="AAH16090.1"/>
    <property type="molecule type" value="mRNA"/>
</dbReference>
<dbReference type="CCDS" id="CCDS25772.1"/>
<dbReference type="RefSeq" id="NP_080548.3">
    <property type="nucleotide sequence ID" value="NM_026272.3"/>
</dbReference>
<dbReference type="SMR" id="Q9CYQ7"/>
<dbReference type="FunCoup" id="Q9CYQ7">
    <property type="interactions" value="1797"/>
</dbReference>
<dbReference type="STRING" id="10090.ENSMUSP00000099304"/>
<dbReference type="GlyGen" id="Q9CYQ7">
    <property type="glycosylation" value="1 site, 1 O-linked glycan (1 site)"/>
</dbReference>
<dbReference type="iPTMnet" id="Q9CYQ7"/>
<dbReference type="PhosphoSitePlus" id="Q9CYQ7"/>
<dbReference type="jPOST" id="Q9CYQ7"/>
<dbReference type="PaxDb" id="10090-ENSMUSP00000099304"/>
<dbReference type="PeptideAtlas" id="Q9CYQ7"/>
<dbReference type="ProteomicsDB" id="287439"/>
<dbReference type="Antibodypedia" id="33014">
    <property type="antibodies" value="190 antibodies from 28 providers"/>
</dbReference>
<dbReference type="Ensembl" id="ENSMUST00000103015.4">
    <property type="protein sequence ID" value="ENSMUSP00000099304.4"/>
    <property type="gene ID" value="ENSMUSG00000000056.8"/>
</dbReference>
<dbReference type="GeneID" id="67608"/>
<dbReference type="KEGG" id="mmu:67608"/>
<dbReference type="UCSC" id="uc007mvq.2">
    <property type="organism name" value="mouse"/>
</dbReference>
<dbReference type="AGR" id="MGI:1914858"/>
<dbReference type="CTD" id="26502"/>
<dbReference type="MGI" id="MGI:1914858">
    <property type="gene designation" value="Narf"/>
</dbReference>
<dbReference type="VEuPathDB" id="HostDB:ENSMUSG00000000056"/>
<dbReference type="eggNOG" id="KOG2439">
    <property type="taxonomic scope" value="Eukaryota"/>
</dbReference>
<dbReference type="GeneTree" id="ENSGT00940000153514"/>
<dbReference type="HOGENOM" id="CLU_018240_0_0_1"/>
<dbReference type="InParanoid" id="Q9CYQ7"/>
<dbReference type="OMA" id="IKFCEHY"/>
<dbReference type="OrthoDB" id="10253113at2759"/>
<dbReference type="PhylomeDB" id="Q9CYQ7"/>
<dbReference type="TreeFam" id="TF106273"/>
<dbReference type="BioGRID-ORCS" id="67608">
    <property type="hits" value="3 hits in 79 CRISPR screens"/>
</dbReference>
<dbReference type="ChiTaRS" id="Narf">
    <property type="organism name" value="mouse"/>
</dbReference>
<dbReference type="PRO" id="PR:Q9CYQ7"/>
<dbReference type="Proteomes" id="UP000000589">
    <property type="component" value="Chromosome 11"/>
</dbReference>
<dbReference type="RNAct" id="Q9CYQ7">
    <property type="molecule type" value="protein"/>
</dbReference>
<dbReference type="Bgee" id="ENSMUSG00000000056">
    <property type="expression patterns" value="Expressed in fetal liver hematopoietic progenitor cell and 246 other cell types or tissues"/>
</dbReference>
<dbReference type="GO" id="GO:0005638">
    <property type="term" value="C:lamin filament"/>
    <property type="evidence" value="ECO:0007669"/>
    <property type="project" value="Ensembl"/>
</dbReference>
<dbReference type="GO" id="GO:0005730">
    <property type="term" value="C:nucleolus"/>
    <property type="evidence" value="ECO:0007669"/>
    <property type="project" value="Ensembl"/>
</dbReference>
<dbReference type="GO" id="GO:0005654">
    <property type="term" value="C:nucleoplasm"/>
    <property type="evidence" value="ECO:0007669"/>
    <property type="project" value="Ensembl"/>
</dbReference>
<dbReference type="GO" id="GO:0005521">
    <property type="term" value="F:lamin binding"/>
    <property type="evidence" value="ECO:0007669"/>
    <property type="project" value="Ensembl"/>
</dbReference>
<dbReference type="FunFam" id="3.40.50.1780:FF:000019">
    <property type="entry name" value="Cytosolic Fe-S cluster assembly factor NAR1"/>
    <property type="match status" value="1"/>
</dbReference>
<dbReference type="Gene3D" id="3.40.50.1780">
    <property type="match status" value="1"/>
</dbReference>
<dbReference type="Gene3D" id="3.40.950.10">
    <property type="entry name" value="Fe-only Hydrogenase (Larger Subunit), Chain L, domain 3"/>
    <property type="match status" value="1"/>
</dbReference>
<dbReference type="InterPro" id="IPR050340">
    <property type="entry name" value="Cytosolic_Fe-S_CAF"/>
</dbReference>
<dbReference type="InterPro" id="IPR009016">
    <property type="entry name" value="Fe_hydrogenase"/>
</dbReference>
<dbReference type="InterPro" id="IPR004108">
    <property type="entry name" value="Fe_hydrogenase_lsu_C"/>
</dbReference>
<dbReference type="InterPro" id="IPR003149">
    <property type="entry name" value="Fe_hydrogenase_ssu"/>
</dbReference>
<dbReference type="PANTHER" id="PTHR11615">
    <property type="entry name" value="NITRATE, FORMATE, IRON DEHYDROGENASE"/>
    <property type="match status" value="1"/>
</dbReference>
<dbReference type="Pfam" id="PF02906">
    <property type="entry name" value="Fe_hyd_lg_C"/>
    <property type="match status" value="1"/>
</dbReference>
<dbReference type="Pfam" id="PF02256">
    <property type="entry name" value="Fe_hyd_SSU"/>
    <property type="match status" value="1"/>
</dbReference>
<dbReference type="SMART" id="SM00902">
    <property type="entry name" value="Fe_hyd_SSU"/>
    <property type="match status" value="1"/>
</dbReference>
<dbReference type="SUPFAM" id="SSF53920">
    <property type="entry name" value="Fe-only hydrogenase"/>
    <property type="match status" value="1"/>
</dbReference>
<accession>Q9CYQ7</accession>
<accession>Q8BVW9</accession>
<organism>
    <name type="scientific">Mus musculus</name>
    <name type="common">Mouse</name>
    <dbReference type="NCBI Taxonomy" id="10090"/>
    <lineage>
        <taxon>Eukaryota</taxon>
        <taxon>Metazoa</taxon>
        <taxon>Chordata</taxon>
        <taxon>Craniata</taxon>
        <taxon>Vertebrata</taxon>
        <taxon>Euteleostomi</taxon>
        <taxon>Mammalia</taxon>
        <taxon>Eutheria</taxon>
        <taxon>Euarchontoglires</taxon>
        <taxon>Glires</taxon>
        <taxon>Rodentia</taxon>
        <taxon>Myomorpha</taxon>
        <taxon>Muroidea</taxon>
        <taxon>Muridae</taxon>
        <taxon>Murinae</taxon>
        <taxon>Mus</taxon>
        <taxon>Mus</taxon>
    </lineage>
</organism>
<comment type="subunit">
    <text evidence="1">Interacts with LMNA and binds to the farnesylated C-terminal domain.</text>
</comment>
<comment type="subcellular location">
    <subcellularLocation>
        <location evidence="1">Nucleus</location>
    </subcellularLocation>
</comment>
<comment type="similarity">
    <text evidence="4">Belongs to the NARF family.</text>
</comment>
<evidence type="ECO:0000250" key="1"/>
<evidence type="ECO:0000250" key="2">
    <source>
        <dbReference type="UniProtKB" id="Q9UHQ1"/>
    </source>
</evidence>
<evidence type="ECO:0000256" key="3">
    <source>
        <dbReference type="SAM" id="MobiDB-lite"/>
    </source>
</evidence>
<evidence type="ECO:0000305" key="4"/>
<keyword id="KW-0539">Nucleus</keyword>
<keyword id="KW-0597">Phosphoprotein</keyword>
<keyword id="KW-1185">Reference proteome</keyword>
<sequence length="462" mass="51816">MKCEHCTRKECSKKSKTDDQENVSSDGAQPSDGASPAKESEEKGEFHKLADAKIFLSDCLACDSCVTVEEGVQLSQQSAKDFLHVLNLNKRCDTSKHRVLVVSVCPQSLPYFAAKFNLSVTDASRRLCGFLKSLGVHYVFDTTIAADFSILESQKEFVRRYHQHSEEQRELPMLTSACPGWVRYAERVLGRPIIPYLCTAKSPQQVMGSLVKDYFARQQNLSPEKIFHVVVAPCYDKKLEALREGLSTTLNGARGTDCVLTSGEIAQIMEQSDLSVKDIAVDTLFGDMKEVAVQRHDGVSSDGHLAHVFRHAAKELFGEHVEEITYRALRNKDFHEVTLEKNGEVLLRFAAAYGFRNIQNMIQKLKKGKLPYHFVEVLACPRGCLNGRGQAQTEDGHTDRALLQQMEGIYSGIPVRPPESSTHVQELYQEWLEGTESPKVQEVLHTSYQSLEPCTDGLDIKW</sequence>
<protein>
    <recommendedName>
        <fullName>Nuclear prelamin A recognition factor</fullName>
    </recommendedName>
    <alternativeName>
        <fullName>Iron-only hydrogenase-like protein 2</fullName>
        <shortName>IOP2</shortName>
    </alternativeName>
</protein>
<feature type="chain" id="PRO_0000288480" description="Nuclear prelamin A recognition factor">
    <location>
        <begin position="1"/>
        <end position="462"/>
    </location>
</feature>
<feature type="region of interest" description="Disordered" evidence="3">
    <location>
        <begin position="1"/>
        <end position="43"/>
    </location>
</feature>
<feature type="compositionally biased region" description="Basic and acidic residues" evidence="3">
    <location>
        <begin position="1"/>
        <end position="19"/>
    </location>
</feature>
<feature type="modified residue" description="Phosphoserine" evidence="2">
    <location>
        <position position="35"/>
    </location>
</feature>
<feature type="sequence conflict" description="In Ref. 1; BAC36265." evidence="4" ref="1">
    <original>T</original>
    <variation>N</variation>
    <location>
        <position position="17"/>
    </location>
</feature>
<reference key="1">
    <citation type="journal article" date="2005" name="Science">
        <title>The transcriptional landscape of the mammalian genome.</title>
        <authorList>
            <person name="Carninci P."/>
            <person name="Kasukawa T."/>
            <person name="Katayama S."/>
            <person name="Gough J."/>
            <person name="Frith M.C."/>
            <person name="Maeda N."/>
            <person name="Oyama R."/>
            <person name="Ravasi T."/>
            <person name="Lenhard B."/>
            <person name="Wells C."/>
            <person name="Kodzius R."/>
            <person name="Shimokawa K."/>
            <person name="Bajic V.B."/>
            <person name="Brenner S.E."/>
            <person name="Batalov S."/>
            <person name="Forrest A.R."/>
            <person name="Zavolan M."/>
            <person name="Davis M.J."/>
            <person name="Wilming L.G."/>
            <person name="Aidinis V."/>
            <person name="Allen J.E."/>
            <person name="Ambesi-Impiombato A."/>
            <person name="Apweiler R."/>
            <person name="Aturaliya R.N."/>
            <person name="Bailey T.L."/>
            <person name="Bansal M."/>
            <person name="Baxter L."/>
            <person name="Beisel K.W."/>
            <person name="Bersano T."/>
            <person name="Bono H."/>
            <person name="Chalk A.M."/>
            <person name="Chiu K.P."/>
            <person name="Choudhary V."/>
            <person name="Christoffels A."/>
            <person name="Clutterbuck D.R."/>
            <person name="Crowe M.L."/>
            <person name="Dalla E."/>
            <person name="Dalrymple B.P."/>
            <person name="de Bono B."/>
            <person name="Della Gatta G."/>
            <person name="di Bernardo D."/>
            <person name="Down T."/>
            <person name="Engstrom P."/>
            <person name="Fagiolini M."/>
            <person name="Faulkner G."/>
            <person name="Fletcher C.F."/>
            <person name="Fukushima T."/>
            <person name="Furuno M."/>
            <person name="Futaki S."/>
            <person name="Gariboldi M."/>
            <person name="Georgii-Hemming P."/>
            <person name="Gingeras T.R."/>
            <person name="Gojobori T."/>
            <person name="Green R.E."/>
            <person name="Gustincich S."/>
            <person name="Harbers M."/>
            <person name="Hayashi Y."/>
            <person name="Hensch T.K."/>
            <person name="Hirokawa N."/>
            <person name="Hill D."/>
            <person name="Huminiecki L."/>
            <person name="Iacono M."/>
            <person name="Ikeo K."/>
            <person name="Iwama A."/>
            <person name="Ishikawa T."/>
            <person name="Jakt M."/>
            <person name="Kanapin A."/>
            <person name="Katoh M."/>
            <person name="Kawasawa Y."/>
            <person name="Kelso J."/>
            <person name="Kitamura H."/>
            <person name="Kitano H."/>
            <person name="Kollias G."/>
            <person name="Krishnan S.P."/>
            <person name="Kruger A."/>
            <person name="Kummerfeld S.K."/>
            <person name="Kurochkin I.V."/>
            <person name="Lareau L.F."/>
            <person name="Lazarevic D."/>
            <person name="Lipovich L."/>
            <person name="Liu J."/>
            <person name="Liuni S."/>
            <person name="McWilliam S."/>
            <person name="Madan Babu M."/>
            <person name="Madera M."/>
            <person name="Marchionni L."/>
            <person name="Matsuda H."/>
            <person name="Matsuzawa S."/>
            <person name="Miki H."/>
            <person name="Mignone F."/>
            <person name="Miyake S."/>
            <person name="Morris K."/>
            <person name="Mottagui-Tabar S."/>
            <person name="Mulder N."/>
            <person name="Nakano N."/>
            <person name="Nakauchi H."/>
            <person name="Ng P."/>
            <person name="Nilsson R."/>
            <person name="Nishiguchi S."/>
            <person name="Nishikawa S."/>
            <person name="Nori F."/>
            <person name="Ohara O."/>
            <person name="Okazaki Y."/>
            <person name="Orlando V."/>
            <person name="Pang K.C."/>
            <person name="Pavan W.J."/>
            <person name="Pavesi G."/>
            <person name="Pesole G."/>
            <person name="Petrovsky N."/>
            <person name="Piazza S."/>
            <person name="Reed J."/>
            <person name="Reid J.F."/>
            <person name="Ring B.Z."/>
            <person name="Ringwald M."/>
            <person name="Rost B."/>
            <person name="Ruan Y."/>
            <person name="Salzberg S.L."/>
            <person name="Sandelin A."/>
            <person name="Schneider C."/>
            <person name="Schoenbach C."/>
            <person name="Sekiguchi K."/>
            <person name="Semple C.A."/>
            <person name="Seno S."/>
            <person name="Sessa L."/>
            <person name="Sheng Y."/>
            <person name="Shibata Y."/>
            <person name="Shimada H."/>
            <person name="Shimada K."/>
            <person name="Silva D."/>
            <person name="Sinclair B."/>
            <person name="Sperling S."/>
            <person name="Stupka E."/>
            <person name="Sugiura K."/>
            <person name="Sultana R."/>
            <person name="Takenaka Y."/>
            <person name="Taki K."/>
            <person name="Tammoja K."/>
            <person name="Tan S.L."/>
            <person name="Tang S."/>
            <person name="Taylor M.S."/>
            <person name="Tegner J."/>
            <person name="Teichmann S.A."/>
            <person name="Ueda H.R."/>
            <person name="van Nimwegen E."/>
            <person name="Verardo R."/>
            <person name="Wei C.L."/>
            <person name="Yagi K."/>
            <person name="Yamanishi H."/>
            <person name="Zabarovsky E."/>
            <person name="Zhu S."/>
            <person name="Zimmer A."/>
            <person name="Hide W."/>
            <person name="Bult C."/>
            <person name="Grimmond S.M."/>
            <person name="Teasdale R.D."/>
            <person name="Liu E.T."/>
            <person name="Brusic V."/>
            <person name="Quackenbush J."/>
            <person name="Wahlestedt C."/>
            <person name="Mattick J.S."/>
            <person name="Hume D.A."/>
            <person name="Kai C."/>
            <person name="Sasaki D."/>
            <person name="Tomaru Y."/>
            <person name="Fukuda S."/>
            <person name="Kanamori-Katayama M."/>
            <person name="Suzuki M."/>
            <person name="Aoki J."/>
            <person name="Arakawa T."/>
            <person name="Iida J."/>
            <person name="Imamura K."/>
            <person name="Itoh M."/>
            <person name="Kato T."/>
            <person name="Kawaji H."/>
            <person name="Kawagashira N."/>
            <person name="Kawashima T."/>
            <person name="Kojima M."/>
            <person name="Kondo S."/>
            <person name="Konno H."/>
            <person name="Nakano K."/>
            <person name="Ninomiya N."/>
            <person name="Nishio T."/>
            <person name="Okada M."/>
            <person name="Plessy C."/>
            <person name="Shibata K."/>
            <person name="Shiraki T."/>
            <person name="Suzuki S."/>
            <person name="Tagami M."/>
            <person name="Waki K."/>
            <person name="Watahiki A."/>
            <person name="Okamura-Oho Y."/>
            <person name="Suzuki H."/>
            <person name="Kawai J."/>
            <person name="Hayashizaki Y."/>
        </authorList>
    </citation>
    <scope>NUCLEOTIDE SEQUENCE [LARGE SCALE MRNA]</scope>
    <source>
        <strain>C57BL/6J</strain>
        <tissue>Head</tissue>
        <tissue>Liver</tissue>
    </source>
</reference>
<reference key="2">
    <citation type="journal article" date="2004" name="Genome Res.">
        <title>The status, quality, and expansion of the NIH full-length cDNA project: the Mammalian Gene Collection (MGC).</title>
        <authorList>
            <consortium name="The MGC Project Team"/>
        </authorList>
    </citation>
    <scope>NUCLEOTIDE SEQUENCE [LARGE SCALE MRNA]</scope>
    <source>
        <tissue>Eye</tissue>
    </source>
</reference>
<gene>
    <name type="primary">Narf</name>
</gene>